<reference key="1">
    <citation type="journal article" date="1997" name="J. Bacteriol.">
        <title>Complete genome sequence of Methanobacterium thermoautotrophicum deltaH: functional analysis and comparative genomics.</title>
        <authorList>
            <person name="Smith D.R."/>
            <person name="Doucette-Stamm L.A."/>
            <person name="Deloughery C."/>
            <person name="Lee H.-M."/>
            <person name="Dubois J."/>
            <person name="Aldredge T."/>
            <person name="Bashirzadeh R."/>
            <person name="Blakely D."/>
            <person name="Cook R."/>
            <person name="Gilbert K."/>
            <person name="Harrison D."/>
            <person name="Hoang L."/>
            <person name="Keagle P."/>
            <person name="Lumm W."/>
            <person name="Pothier B."/>
            <person name="Qiu D."/>
            <person name="Spadafora R."/>
            <person name="Vicare R."/>
            <person name="Wang Y."/>
            <person name="Wierzbowski J."/>
            <person name="Gibson R."/>
            <person name="Jiwani N."/>
            <person name="Caruso A."/>
            <person name="Bush D."/>
            <person name="Safer H."/>
            <person name="Patwell D."/>
            <person name="Prabhakar S."/>
            <person name="McDougall S."/>
            <person name="Shimer G."/>
            <person name="Goyal A."/>
            <person name="Pietrovski S."/>
            <person name="Church G.M."/>
            <person name="Daniels C.J."/>
            <person name="Mao J.-I."/>
            <person name="Rice P."/>
            <person name="Noelling J."/>
            <person name="Reeve J.N."/>
        </authorList>
    </citation>
    <scope>NUCLEOTIDE SEQUENCE [LARGE SCALE GENOMIC DNA]</scope>
    <source>
        <strain>ATCC 29096 / DSM 1053 / JCM 10044 / NBRC 100330 / Delta H</strain>
    </source>
</reference>
<gene>
    <name evidence="1" type="primary">aroC</name>
    <name type="ordered locus">MTH_748</name>
</gene>
<keyword id="KW-0028">Amino-acid biosynthesis</keyword>
<keyword id="KW-0057">Aromatic amino acid biosynthesis</keyword>
<keyword id="KW-0274">FAD</keyword>
<keyword id="KW-0285">Flavoprotein</keyword>
<keyword id="KW-0288">FMN</keyword>
<keyword id="KW-0456">Lyase</keyword>
<keyword id="KW-0521">NADP</keyword>
<keyword id="KW-1185">Reference proteome</keyword>
<name>AROC_METTH</name>
<accession>O26843</accession>
<proteinExistence type="inferred from homology"/>
<evidence type="ECO:0000255" key="1">
    <source>
        <dbReference type="HAMAP-Rule" id="MF_00300"/>
    </source>
</evidence>
<organism>
    <name type="scientific">Methanothermobacter thermautotrophicus (strain ATCC 29096 / DSM 1053 / JCM 10044 / NBRC 100330 / Delta H)</name>
    <name type="common">Methanobacterium thermoautotrophicum</name>
    <dbReference type="NCBI Taxonomy" id="187420"/>
    <lineage>
        <taxon>Archaea</taxon>
        <taxon>Methanobacteriati</taxon>
        <taxon>Methanobacteriota</taxon>
        <taxon>Methanomada group</taxon>
        <taxon>Methanobacteria</taxon>
        <taxon>Methanobacteriales</taxon>
        <taxon>Methanobacteriaceae</taxon>
        <taxon>Methanothermobacter</taxon>
    </lineage>
</organism>
<feature type="chain" id="PRO_0000140693" description="Chorismate synthase">
    <location>
        <begin position="1"/>
        <end position="374"/>
    </location>
</feature>
<feature type="binding site" evidence="1">
    <location>
        <position position="55"/>
    </location>
    <ligand>
        <name>NADP(+)</name>
        <dbReference type="ChEBI" id="CHEBI:58349"/>
    </ligand>
</feature>
<feature type="binding site" evidence="1">
    <location>
        <begin position="132"/>
        <end position="134"/>
    </location>
    <ligand>
        <name>FMN</name>
        <dbReference type="ChEBI" id="CHEBI:58210"/>
    </ligand>
</feature>
<feature type="binding site" evidence="1">
    <location>
        <position position="293"/>
    </location>
    <ligand>
        <name>FMN</name>
        <dbReference type="ChEBI" id="CHEBI:58210"/>
    </ligand>
</feature>
<feature type="binding site" evidence="1">
    <location>
        <begin position="308"/>
        <end position="312"/>
    </location>
    <ligand>
        <name>FMN</name>
        <dbReference type="ChEBI" id="CHEBI:58210"/>
    </ligand>
</feature>
<feature type="binding site" evidence="1">
    <location>
        <position position="335"/>
    </location>
    <ligand>
        <name>FMN</name>
        <dbReference type="ChEBI" id="CHEBI:58210"/>
    </ligand>
</feature>
<protein>
    <recommendedName>
        <fullName evidence="1">Chorismate synthase</fullName>
        <shortName evidence="1">CS</shortName>
        <ecNumber evidence="1">4.2.3.5</ecNumber>
    </recommendedName>
    <alternativeName>
        <fullName evidence="1">5-enolpyruvylshikimate-3-phosphate phospholyase</fullName>
    </alternativeName>
</protein>
<dbReference type="EC" id="4.2.3.5" evidence="1"/>
<dbReference type="EMBL" id="AE000666">
    <property type="protein sequence ID" value="AAB85252.1"/>
    <property type="molecule type" value="Genomic_DNA"/>
</dbReference>
<dbReference type="PIR" id="A69200">
    <property type="entry name" value="A69200"/>
</dbReference>
<dbReference type="SMR" id="O26843"/>
<dbReference type="FunCoup" id="O26843">
    <property type="interactions" value="149"/>
</dbReference>
<dbReference type="STRING" id="187420.MTH_748"/>
<dbReference type="PaxDb" id="187420-MTH_748"/>
<dbReference type="EnsemblBacteria" id="AAB85252">
    <property type="protein sequence ID" value="AAB85252"/>
    <property type="gene ID" value="MTH_748"/>
</dbReference>
<dbReference type="KEGG" id="mth:MTH_748"/>
<dbReference type="PATRIC" id="fig|187420.15.peg.736"/>
<dbReference type="HOGENOM" id="CLU_034547_0_2_2"/>
<dbReference type="InParanoid" id="O26843"/>
<dbReference type="UniPathway" id="UPA00053">
    <property type="reaction ID" value="UER00090"/>
</dbReference>
<dbReference type="Proteomes" id="UP000005223">
    <property type="component" value="Chromosome"/>
</dbReference>
<dbReference type="GO" id="GO:0005829">
    <property type="term" value="C:cytosol"/>
    <property type="evidence" value="ECO:0007669"/>
    <property type="project" value="TreeGrafter"/>
</dbReference>
<dbReference type="GO" id="GO:0004107">
    <property type="term" value="F:chorismate synthase activity"/>
    <property type="evidence" value="ECO:0007669"/>
    <property type="project" value="UniProtKB-UniRule"/>
</dbReference>
<dbReference type="GO" id="GO:0010181">
    <property type="term" value="F:FMN binding"/>
    <property type="evidence" value="ECO:0007669"/>
    <property type="project" value="TreeGrafter"/>
</dbReference>
<dbReference type="GO" id="GO:0008652">
    <property type="term" value="P:amino acid biosynthetic process"/>
    <property type="evidence" value="ECO:0007669"/>
    <property type="project" value="UniProtKB-KW"/>
</dbReference>
<dbReference type="GO" id="GO:0009073">
    <property type="term" value="P:aromatic amino acid family biosynthetic process"/>
    <property type="evidence" value="ECO:0007669"/>
    <property type="project" value="UniProtKB-KW"/>
</dbReference>
<dbReference type="GO" id="GO:0009423">
    <property type="term" value="P:chorismate biosynthetic process"/>
    <property type="evidence" value="ECO:0007669"/>
    <property type="project" value="UniProtKB-UniRule"/>
</dbReference>
<dbReference type="CDD" id="cd07304">
    <property type="entry name" value="Chorismate_synthase"/>
    <property type="match status" value="1"/>
</dbReference>
<dbReference type="FunFam" id="3.60.150.10:FF:000002">
    <property type="entry name" value="Chorismate synthase"/>
    <property type="match status" value="1"/>
</dbReference>
<dbReference type="Gene3D" id="3.60.150.10">
    <property type="entry name" value="Chorismate synthase AroC"/>
    <property type="match status" value="1"/>
</dbReference>
<dbReference type="HAMAP" id="MF_00300">
    <property type="entry name" value="Chorismate_synth"/>
    <property type="match status" value="1"/>
</dbReference>
<dbReference type="InterPro" id="IPR000453">
    <property type="entry name" value="Chorismate_synth"/>
</dbReference>
<dbReference type="InterPro" id="IPR035904">
    <property type="entry name" value="Chorismate_synth_AroC_sf"/>
</dbReference>
<dbReference type="InterPro" id="IPR020541">
    <property type="entry name" value="Chorismate_synthase_CS"/>
</dbReference>
<dbReference type="NCBIfam" id="TIGR00033">
    <property type="entry name" value="aroC"/>
    <property type="match status" value="1"/>
</dbReference>
<dbReference type="NCBIfam" id="NF003793">
    <property type="entry name" value="PRK05382.1"/>
    <property type="match status" value="1"/>
</dbReference>
<dbReference type="PANTHER" id="PTHR21085">
    <property type="entry name" value="CHORISMATE SYNTHASE"/>
    <property type="match status" value="1"/>
</dbReference>
<dbReference type="PANTHER" id="PTHR21085:SF0">
    <property type="entry name" value="CHORISMATE SYNTHASE"/>
    <property type="match status" value="1"/>
</dbReference>
<dbReference type="Pfam" id="PF01264">
    <property type="entry name" value="Chorismate_synt"/>
    <property type="match status" value="1"/>
</dbReference>
<dbReference type="PIRSF" id="PIRSF001456">
    <property type="entry name" value="Chorismate_synth"/>
    <property type="match status" value="1"/>
</dbReference>
<dbReference type="SUPFAM" id="SSF103263">
    <property type="entry name" value="Chorismate synthase, AroC"/>
    <property type="match status" value="1"/>
</dbReference>
<dbReference type="PROSITE" id="PS00787">
    <property type="entry name" value="CHORISMATE_SYNTHASE_1"/>
    <property type="match status" value="1"/>
</dbReference>
<dbReference type="PROSITE" id="PS00788">
    <property type="entry name" value="CHORISMATE_SYNTHASE_2"/>
    <property type="match status" value="1"/>
</dbReference>
<dbReference type="PROSITE" id="PS00789">
    <property type="entry name" value="CHORISMATE_SYNTHASE_3"/>
    <property type="match status" value="1"/>
</dbReference>
<comment type="function">
    <text evidence="1">Catalyzes the anti-1,4-elimination of the C-3 phosphate and the C-6 proR hydrogen from 5-enolpyruvylshikimate-3-phosphate (EPSP) to yield chorismate, which is the branch point compound that serves as the starting substrate for the three terminal pathways of aromatic amino acid biosynthesis. This reaction introduces a second double bond into the aromatic ring system.</text>
</comment>
<comment type="catalytic activity">
    <reaction evidence="1">
        <text>5-O-(1-carboxyvinyl)-3-phosphoshikimate = chorismate + phosphate</text>
        <dbReference type="Rhea" id="RHEA:21020"/>
        <dbReference type="ChEBI" id="CHEBI:29748"/>
        <dbReference type="ChEBI" id="CHEBI:43474"/>
        <dbReference type="ChEBI" id="CHEBI:57701"/>
        <dbReference type="EC" id="4.2.3.5"/>
    </reaction>
</comment>
<comment type="cofactor">
    <cofactor evidence="1">
        <name>FMNH2</name>
        <dbReference type="ChEBI" id="CHEBI:57618"/>
    </cofactor>
    <text evidence="1">Reduced FMN (FMNH(2)).</text>
</comment>
<comment type="pathway">
    <text evidence="1">Metabolic intermediate biosynthesis; chorismate biosynthesis; chorismate from D-erythrose 4-phosphate and phosphoenolpyruvate: step 7/7.</text>
</comment>
<comment type="similarity">
    <text evidence="1">Belongs to the chorismate synthase family.</text>
</comment>
<sequence length="374" mass="39589">MILCGDSVAGNSTGEMFRVTTFGSSHGPAVGAVIDGCPAGLELSEDDIQQELNRRRPGTGALTTPRAESDRVEILSGIFRGRTDGTPIAGIVRNLDADSKSYSNIKNTPRPGHGDYTWRARFRNYDYRGGGRGSGRVTIGHVIGGAVAKKLIGNYGLTVTGHVVQVGDVKADTVSLKRIGEYAESNPVRCADPRAARQMEKVILDARSRGDSVGGVVEVVVLGAPPGLGDPVFSKLDADMARALMGIGSVKGVEIGMGFEVAEHRASEINDEFYLDDDGKVRTTTNTSGGILGGISSGMPITARIAVKPTPSISVPQKTVDLERMEETTIEVRGRHDPCICPRVVPVAEAAVAIVLADHMIRAGFIHPTYIGNE</sequence>